<keyword id="KW-0002">3D-structure</keyword>
<keyword id="KW-0903">Direct protein sequencing</keyword>
<keyword id="KW-0496">Mitochondrion</keyword>
<keyword id="KW-1185">Reference proteome</keyword>
<keyword id="KW-0687">Ribonucleoprotein</keyword>
<keyword id="KW-0689">Ribosomal protein</keyword>
<keyword id="KW-0809">Transit peptide</keyword>
<dbReference type="EMBL" id="BC103054">
    <property type="protein sequence ID" value="AAI03055.1"/>
    <property type="molecule type" value="mRNA"/>
</dbReference>
<dbReference type="RefSeq" id="NP_001029686.1">
    <property type="nucleotide sequence ID" value="NM_001034514.2"/>
</dbReference>
<dbReference type="PDB" id="3JD5">
    <property type="method" value="EM"/>
    <property type="resolution" value="7.00 A"/>
    <property type="chains" value="d=1-205"/>
</dbReference>
<dbReference type="PDB" id="6NEQ">
    <property type="method" value="EM"/>
    <property type="resolution" value="3.32 A"/>
    <property type="chains" value="d=1-205"/>
</dbReference>
<dbReference type="PDB" id="6NF8">
    <property type="method" value="EM"/>
    <property type="resolution" value="3.48 A"/>
    <property type="chains" value="d=1-205"/>
</dbReference>
<dbReference type="PDBsum" id="3JD5"/>
<dbReference type="PDBsum" id="6NEQ"/>
<dbReference type="PDBsum" id="6NF8"/>
<dbReference type="EMDB" id="EMD-9358"/>
<dbReference type="EMDB" id="EMD-9362"/>
<dbReference type="SMR" id="Q3SZ86"/>
<dbReference type="CORUM" id="Q3SZ86"/>
<dbReference type="FunCoup" id="Q3SZ86">
    <property type="interactions" value="1424"/>
</dbReference>
<dbReference type="IntAct" id="Q3SZ86">
    <property type="interactions" value="1"/>
</dbReference>
<dbReference type="STRING" id="9913.ENSBTAP00000001091"/>
<dbReference type="PaxDb" id="9913-ENSBTAP00000001091"/>
<dbReference type="GeneID" id="516004"/>
<dbReference type="KEGG" id="bta:516004"/>
<dbReference type="CTD" id="64949"/>
<dbReference type="VEuPathDB" id="HostDB:ENSBTAG00000000825"/>
<dbReference type="eggNOG" id="KOG4691">
    <property type="taxonomic scope" value="Eukaryota"/>
</dbReference>
<dbReference type="HOGENOM" id="CLU_104778_0_0_1"/>
<dbReference type="InParanoid" id="Q3SZ86"/>
<dbReference type="OMA" id="AWVQLKE"/>
<dbReference type="OrthoDB" id="5988811at2759"/>
<dbReference type="TreeFam" id="TF316309"/>
<dbReference type="Reactome" id="R-BTA-5389840">
    <property type="pathway name" value="Mitochondrial translation elongation"/>
</dbReference>
<dbReference type="Reactome" id="R-BTA-5419276">
    <property type="pathway name" value="Mitochondrial translation termination"/>
</dbReference>
<dbReference type="Proteomes" id="UP000009136">
    <property type="component" value="Chromosome 13"/>
</dbReference>
<dbReference type="Bgee" id="ENSBTAG00000000825">
    <property type="expression patterns" value="Expressed in laryngeal cartilage and 108 other cell types or tissues"/>
</dbReference>
<dbReference type="GO" id="GO:0005743">
    <property type="term" value="C:mitochondrial inner membrane"/>
    <property type="evidence" value="ECO:0000304"/>
    <property type="project" value="Reactome"/>
</dbReference>
<dbReference type="GO" id="GO:0005763">
    <property type="term" value="C:mitochondrial small ribosomal subunit"/>
    <property type="evidence" value="ECO:0000314"/>
    <property type="project" value="UniProtKB"/>
</dbReference>
<dbReference type="GO" id="GO:0003735">
    <property type="term" value="F:structural constituent of ribosome"/>
    <property type="evidence" value="ECO:0007005"/>
    <property type="project" value="UniProtKB"/>
</dbReference>
<dbReference type="GO" id="GO:0032543">
    <property type="term" value="P:mitochondrial translation"/>
    <property type="evidence" value="ECO:0007005"/>
    <property type="project" value="UniProtKB"/>
</dbReference>
<dbReference type="InterPro" id="IPR026140">
    <property type="entry name" value="Ribosomal_mS26"/>
</dbReference>
<dbReference type="PANTHER" id="PTHR21035">
    <property type="entry name" value="28S RIBOSOMAL PROTEIN S26, MITOCHONDRIAL"/>
    <property type="match status" value="1"/>
</dbReference>
<dbReference type="PANTHER" id="PTHR21035:SF2">
    <property type="entry name" value="SMALL RIBOSOMAL SUBUNIT PROTEIN MS26"/>
    <property type="match status" value="1"/>
</dbReference>
<dbReference type="Pfam" id="PF14943">
    <property type="entry name" value="MRP-S26"/>
    <property type="match status" value="1"/>
</dbReference>
<feature type="transit peptide" description="Mitochondrion" evidence="1">
    <location>
        <begin position="1"/>
        <end position="26"/>
    </location>
</feature>
<feature type="chain" id="PRO_0000283814" description="Small ribosomal subunit protein mS26">
    <location>
        <begin position="27"/>
        <end position="205"/>
    </location>
</feature>
<feature type="helix" evidence="5">
    <location>
        <begin position="36"/>
        <end position="38"/>
    </location>
</feature>
<feature type="helix" evidence="5">
    <location>
        <begin position="50"/>
        <end position="86"/>
    </location>
</feature>
<feature type="helix" evidence="5">
    <location>
        <begin position="89"/>
        <end position="163"/>
    </location>
</feature>
<feature type="helix" evidence="5">
    <location>
        <begin position="164"/>
        <end position="166"/>
    </location>
</feature>
<feature type="helix" evidence="5">
    <location>
        <begin position="170"/>
        <end position="173"/>
    </location>
</feature>
<feature type="helix" evidence="5">
    <location>
        <begin position="175"/>
        <end position="181"/>
    </location>
</feature>
<feature type="strand" evidence="6">
    <location>
        <begin position="193"/>
        <end position="195"/>
    </location>
</feature>
<comment type="subunit">
    <text evidence="2">Component of the mitochondrial ribosome small subunit (28S) which comprises a 12S rRNA and about 30 distinct proteins.</text>
</comment>
<comment type="subcellular location">
    <subcellularLocation>
        <location evidence="1 2">Mitochondrion</location>
    </subcellularLocation>
</comment>
<comment type="similarity">
    <text evidence="3">Belongs to the mitochondrion-specific ribosomal protein mS26 family.</text>
</comment>
<reference key="1">
    <citation type="submission" date="2005-08" db="EMBL/GenBank/DDBJ databases">
        <authorList>
            <consortium name="NIH - Mammalian Gene Collection (MGC) project"/>
        </authorList>
    </citation>
    <scope>NUCLEOTIDE SEQUENCE [LARGE SCALE MRNA]</scope>
    <source>
        <strain>Hereford</strain>
        <tissue>Heart ventricle</tissue>
    </source>
</reference>
<reference key="2">
    <citation type="journal article" date="2000" name="J. Biol. Chem.">
        <title>Mammalian mitochondrial ribosomal proteins (4). Amino acid sequencing, characterization, and identification of corresponding gene sequences.</title>
        <authorList>
            <person name="O'Brien T.W."/>
            <person name="Liu J."/>
            <person name="Sylvester J.E."/>
            <person name="Mougey E.B."/>
            <person name="Fischel-Ghodsian N."/>
            <person name="Thiede B."/>
            <person name="Wittmann-Liebold B."/>
            <person name="Graack H.R."/>
        </authorList>
    </citation>
    <scope>PROTEIN SEQUENCE OF 27-34</scope>
    <scope>SUBCELLULAR LOCATION</scope>
</reference>
<reference evidence="4" key="3">
    <citation type="journal article" date="2014" name="Proc. Natl. Acad. Sci. U.S.A.">
        <title>Cryo-EM structure of the small subunit of the mammalian mitochondrial ribosome.</title>
        <authorList>
            <person name="Kaushal P.S."/>
            <person name="Sharma M.R."/>
            <person name="Booth T.M."/>
            <person name="Haque E.M."/>
            <person name="Tung C.S."/>
            <person name="Sanbonmatsu K.Y."/>
            <person name="Spremulli L.L."/>
            <person name="Agrawal R.K."/>
        </authorList>
    </citation>
    <scope>STRUCTURE BY ELECTRON MICROSCOPY (7.00 ANGSTROMS)</scope>
    <scope>SUBCELLULAR LOCATION</scope>
    <scope>SUBUNIT</scope>
</reference>
<name>RT26_BOVIN</name>
<evidence type="ECO:0000269" key="1">
    <source>
    </source>
</evidence>
<evidence type="ECO:0000269" key="2">
    <source>
    </source>
</evidence>
<evidence type="ECO:0000305" key="3"/>
<evidence type="ECO:0007744" key="4">
    <source>
        <dbReference type="PDB" id="3JD5"/>
    </source>
</evidence>
<evidence type="ECO:0007829" key="5">
    <source>
        <dbReference type="PDB" id="6NEQ"/>
    </source>
</evidence>
<evidence type="ECO:0007829" key="6">
    <source>
        <dbReference type="PDB" id="6NF8"/>
    </source>
</evidence>
<protein>
    <recommendedName>
        <fullName evidence="3">Small ribosomal subunit protein mS26</fullName>
    </recommendedName>
    <alternativeName>
        <fullName>28S ribosomal protein S26, mitochondrial</fullName>
        <shortName>MRP-S26</shortName>
        <shortName>S26mt</shortName>
    </alternativeName>
</protein>
<sequence length="205" mass="23774">MLRALSTLGARPLGRPPAQFLLLARGRKTRHDPPAKSKIGRVATPPAVDPAEFFVLTERYRQYRQTVRALRQEFVTEVRRKVHEARAGVLAERKALQDAAEHRELMAWNQAENQRLHELRMARLRQEAREQEQWQAEEAAREAREAEAWARLKEQEVLQLQEDAKNFITRENLEARVEEALDSPKSYNWAVTREGQVVTPQHKGS</sequence>
<gene>
    <name type="primary">MRPS26</name>
</gene>
<proteinExistence type="evidence at protein level"/>
<accession>Q3SZ86</accession>
<organism>
    <name type="scientific">Bos taurus</name>
    <name type="common">Bovine</name>
    <dbReference type="NCBI Taxonomy" id="9913"/>
    <lineage>
        <taxon>Eukaryota</taxon>
        <taxon>Metazoa</taxon>
        <taxon>Chordata</taxon>
        <taxon>Craniata</taxon>
        <taxon>Vertebrata</taxon>
        <taxon>Euteleostomi</taxon>
        <taxon>Mammalia</taxon>
        <taxon>Eutheria</taxon>
        <taxon>Laurasiatheria</taxon>
        <taxon>Artiodactyla</taxon>
        <taxon>Ruminantia</taxon>
        <taxon>Pecora</taxon>
        <taxon>Bovidae</taxon>
        <taxon>Bovinae</taxon>
        <taxon>Bos</taxon>
    </lineage>
</organism>